<reference key="1">
    <citation type="journal article" date="1995" name="Gene">
        <title>Characterization of the osteoclast vacuolar H(+)-ATPase B-subunit.</title>
        <authorList>
            <person name="Bartkiewicz M."/>
            <person name="Hernando N."/>
            <person name="Reddy S.V."/>
            <person name="Roodman G.D."/>
            <person name="Baron R."/>
        </authorList>
    </citation>
    <scope>NUCLEOTIDE SEQUENCE [GENOMIC DNA]</scope>
    <source>
        <strain>White leghorn</strain>
        <tissue>Bone</tissue>
    </source>
</reference>
<dbReference type="EMBL" id="U20766">
    <property type="protein sequence ID" value="AAA82983.1"/>
    <property type="molecule type" value="Genomic_DNA"/>
</dbReference>
<dbReference type="SMR" id="P49712"/>
<dbReference type="FunCoup" id="P49712">
    <property type="interactions" value="582"/>
</dbReference>
<dbReference type="STRING" id="9031.ENSGALP00000054654"/>
<dbReference type="VEuPathDB" id="HostDB:geneid_395497"/>
<dbReference type="InParanoid" id="P49712"/>
<dbReference type="Proteomes" id="UP000000539">
    <property type="component" value="Unassembled WGS sequence"/>
</dbReference>
<dbReference type="GO" id="GO:0033180">
    <property type="term" value="C:proton-transporting V-type ATPase, V1 domain"/>
    <property type="evidence" value="ECO:0007669"/>
    <property type="project" value="InterPro"/>
</dbReference>
<dbReference type="GO" id="GO:0005524">
    <property type="term" value="F:ATP binding"/>
    <property type="evidence" value="ECO:0007669"/>
    <property type="project" value="UniProtKB-KW"/>
</dbReference>
<dbReference type="GO" id="GO:0046961">
    <property type="term" value="F:proton-transporting ATPase activity, rotational mechanism"/>
    <property type="evidence" value="ECO:0000318"/>
    <property type="project" value="GO_Central"/>
</dbReference>
<dbReference type="GO" id="GO:0007035">
    <property type="term" value="P:vacuolar acidification"/>
    <property type="evidence" value="ECO:0000318"/>
    <property type="project" value="GO_Central"/>
</dbReference>
<dbReference type="CDD" id="cd18112">
    <property type="entry name" value="ATP-synt_V_A-type_beta_C"/>
    <property type="match status" value="1"/>
</dbReference>
<dbReference type="CDD" id="cd01135">
    <property type="entry name" value="V_A-ATPase_B"/>
    <property type="match status" value="1"/>
</dbReference>
<dbReference type="FunFam" id="3.40.50.12240:FF:000001">
    <property type="entry name" value="V-type proton ATPase subunit B, brain"/>
    <property type="match status" value="1"/>
</dbReference>
<dbReference type="Gene3D" id="3.40.50.12240">
    <property type="match status" value="1"/>
</dbReference>
<dbReference type="HAMAP" id="MF_00310">
    <property type="entry name" value="ATP_synth_B_arch"/>
    <property type="match status" value="1"/>
</dbReference>
<dbReference type="InterPro" id="IPR055190">
    <property type="entry name" value="ATP-synt_VA_C"/>
</dbReference>
<dbReference type="InterPro" id="IPR020003">
    <property type="entry name" value="ATPase_a/bsu_AS"/>
</dbReference>
<dbReference type="InterPro" id="IPR000194">
    <property type="entry name" value="ATPase_F1/V1/A1_a/bsu_nucl-bd"/>
</dbReference>
<dbReference type="InterPro" id="IPR005723">
    <property type="entry name" value="ATPase_V1-cplx_bsu"/>
</dbReference>
<dbReference type="InterPro" id="IPR027417">
    <property type="entry name" value="P-loop_NTPase"/>
</dbReference>
<dbReference type="InterPro" id="IPR022879">
    <property type="entry name" value="V-ATPase_su_B/beta"/>
</dbReference>
<dbReference type="NCBIfam" id="NF003235">
    <property type="entry name" value="PRK04196.1"/>
    <property type="match status" value="1"/>
</dbReference>
<dbReference type="NCBIfam" id="TIGR01040">
    <property type="entry name" value="V-ATPase_V1_B"/>
    <property type="match status" value="1"/>
</dbReference>
<dbReference type="PANTHER" id="PTHR43389">
    <property type="entry name" value="V-TYPE PROTON ATPASE SUBUNIT B"/>
    <property type="match status" value="1"/>
</dbReference>
<dbReference type="PANTHER" id="PTHR43389:SF5">
    <property type="entry name" value="V-TYPE PROTON ATPASE SUBUNIT B, BRAIN ISOFORM"/>
    <property type="match status" value="1"/>
</dbReference>
<dbReference type="Pfam" id="PF00006">
    <property type="entry name" value="ATP-synt_ab"/>
    <property type="match status" value="1"/>
</dbReference>
<dbReference type="Pfam" id="PF22919">
    <property type="entry name" value="ATP-synt_VA_C"/>
    <property type="match status" value="1"/>
</dbReference>
<dbReference type="SUPFAM" id="SSF52540">
    <property type="entry name" value="P-loop containing nucleoside triphosphate hydrolases"/>
    <property type="match status" value="1"/>
</dbReference>
<dbReference type="PROSITE" id="PS00152">
    <property type="entry name" value="ATPASE_ALPHA_BETA"/>
    <property type="match status" value="1"/>
</dbReference>
<feature type="chain" id="PRO_0000144630" description="V-type proton ATPase subunit B">
    <location>
        <begin position="1"/>
        <end position="453"/>
    </location>
</feature>
<feature type="binding site" evidence="2">
    <location>
        <position position="341"/>
    </location>
    <ligand>
        <name>ATP</name>
        <dbReference type="ChEBI" id="CHEBI:30616"/>
    </ligand>
</feature>
<evidence type="ECO:0000250" key="1">
    <source>
        <dbReference type="UniProtKB" id="P15313"/>
    </source>
</evidence>
<evidence type="ECO:0000250" key="2">
    <source>
        <dbReference type="UniProtKB" id="P21281"/>
    </source>
</evidence>
<evidence type="ECO:0000305" key="3"/>
<protein>
    <recommendedName>
        <fullName>V-type proton ATPase subunit B</fullName>
        <shortName>V-ATPase subunit B</shortName>
    </recommendedName>
    <alternativeName>
        <fullName>Vacuolar proton pump subunit B</fullName>
    </alternativeName>
</protein>
<organism>
    <name type="scientific">Gallus gallus</name>
    <name type="common">Chicken</name>
    <dbReference type="NCBI Taxonomy" id="9031"/>
    <lineage>
        <taxon>Eukaryota</taxon>
        <taxon>Metazoa</taxon>
        <taxon>Chordata</taxon>
        <taxon>Craniata</taxon>
        <taxon>Vertebrata</taxon>
        <taxon>Euteleostomi</taxon>
        <taxon>Archelosauria</taxon>
        <taxon>Archosauria</taxon>
        <taxon>Dinosauria</taxon>
        <taxon>Saurischia</taxon>
        <taxon>Theropoda</taxon>
        <taxon>Coelurosauria</taxon>
        <taxon>Aves</taxon>
        <taxon>Neognathae</taxon>
        <taxon>Galloanserae</taxon>
        <taxon>Galliformes</taxon>
        <taxon>Phasianidae</taxon>
        <taxon>Phasianinae</taxon>
        <taxon>Gallus</taxon>
    </lineage>
</organism>
<keyword id="KW-0067">ATP-binding</keyword>
<keyword id="KW-0375">Hydrogen ion transport</keyword>
<keyword id="KW-0406">Ion transport</keyword>
<keyword id="KW-0547">Nucleotide-binding</keyword>
<keyword id="KW-1185">Reference proteome</keyword>
<keyword id="KW-0813">Transport</keyword>
<name>VATB_CHICK</name>
<proteinExistence type="inferred from homology"/>
<accession>P49712</accession>
<sequence length="453" mass="50225">MAAVAAARRMVNGAGPGGAREQAAALTRDFLSQPRLTYKTVSGVNGPLVITSCEFTGDILRTPVSEDMLGRVFNGSGKPIDRGPAVLAEDFLDIMGQPINPQCRIYPEEMIQTGISAIDGMNSIARGQKIPIFSAAGLPHNEIAAQICRQAGLVKKSKDVMDYSEENFAIVFAAMGVNMETARFFKSDFEENGSMDNVCLFLNLANDPTIERIITPRLALTTAEFLAYQCEKHVLVILTDMSSYAEALREVSAAREEVPGRRGFPGYMYTDLATIYERAGRVEGRNGSITQIPILTMPNDDITHPIPDLTGYITEGQIYVDRQLHNRQIYPPINVLPSLSRLMKSAIGEGMTRKDHADVSNQLYACYAIGKDVQAMKAVVGEEALTSDDLLYLEFLQKFEKNFIAQGPYENRTVYETLDIGWQLLRIFPKEMLKRIPQTTLAEFYPRDSTAKH</sequence>
<comment type="function">
    <text evidence="1">Non-catalytic subunit of the V1 complex of vacuolar(H+)-ATPase (V-ATPase), a multisubunit enzyme composed of a peripheral complex (V1) that hydrolyzes ATP and a membrane integral complex (V0) that translocates protons (By similarity). V-ATPase is responsible for acidifying and maintaining the pH of intracellular compartments and in some cell types, is targeted to the plasma membrane, where it is responsible for acidifying the extracellular environment (By similarity). Essential for the proper assembly and activity of V-ATPase (By similarity).</text>
</comment>
<comment type="subunit">
    <text evidence="2">V-ATPase is a heteromultimeric enzyme made up of two complexes: the ATP-hydrolytic V1 complex and the proton translocation V0 complex (By similarity). The V1 complex consists of three catalytic AB heterodimers that form a heterohexamer, three peripheral stalks each consisting of EG heterodimers, one central rotor including subunits D and F, and the regulatory subunits C and H (By similarity). The proton translocation complex V0 consists of the proton transport subunit a, a ring of proteolipid subunits c9c'', rotary subunit d, subunits e and f, and two accessory subunits (By similarity).</text>
</comment>
<comment type="similarity">
    <text evidence="3">Belongs to the ATPase alpha/beta chains family.</text>
</comment>
<gene>
    <name type="primary">ATP6V1B</name>
</gene>